<feature type="chain" id="PRO_0000192048" description="Flagellar biosynthetic protein FliR">
    <location>
        <begin position="1"/>
        <end position="258"/>
    </location>
</feature>
<feature type="transmembrane region" description="Helical" evidence="2">
    <location>
        <begin position="9"/>
        <end position="29"/>
    </location>
</feature>
<feature type="transmembrane region" description="Helical" evidence="2">
    <location>
        <begin position="42"/>
        <end position="62"/>
    </location>
</feature>
<feature type="transmembrane region" description="Helical" evidence="2">
    <location>
        <begin position="65"/>
        <end position="85"/>
    </location>
</feature>
<feature type="transmembrane region" description="Helical" evidence="2">
    <location>
        <begin position="125"/>
        <end position="145"/>
    </location>
</feature>
<feature type="transmembrane region" description="Helical" evidence="2">
    <location>
        <begin position="181"/>
        <end position="201"/>
    </location>
</feature>
<feature type="transmembrane region" description="Helical" evidence="2">
    <location>
        <begin position="210"/>
        <end position="230"/>
    </location>
</feature>
<proteinExistence type="inferred from homology"/>
<reference key="1">
    <citation type="journal article" date="1998" name="Nature">
        <title>The complete genome of the hyperthermophilic bacterium Aquifex aeolicus.</title>
        <authorList>
            <person name="Deckert G."/>
            <person name="Warren P.V."/>
            <person name="Gaasterland T."/>
            <person name="Young W.G."/>
            <person name="Lenox A.L."/>
            <person name="Graham D.E."/>
            <person name="Overbeek R."/>
            <person name="Snead M.A."/>
            <person name="Keller M."/>
            <person name="Aujay M."/>
            <person name="Huber R."/>
            <person name="Feldman R.A."/>
            <person name="Short J.M."/>
            <person name="Olsen G.J."/>
            <person name="Swanson R.V."/>
        </authorList>
    </citation>
    <scope>NUCLEOTIDE SEQUENCE [LARGE SCALE GENOMIC DNA]</scope>
    <source>
        <strain>VF5</strain>
    </source>
</reference>
<protein>
    <recommendedName>
        <fullName>Flagellar biosynthetic protein FliR</fullName>
    </recommendedName>
</protein>
<keyword id="KW-0975">Bacterial flagellum</keyword>
<keyword id="KW-1003">Cell membrane</keyword>
<keyword id="KW-0472">Membrane</keyword>
<keyword id="KW-1185">Reference proteome</keyword>
<keyword id="KW-0812">Transmembrane</keyword>
<keyword id="KW-1133">Transmembrane helix</keyword>
<comment type="function">
    <text evidence="1">Role in flagellar biosynthesis.</text>
</comment>
<comment type="subcellular location">
    <subcellularLocation>
        <location evidence="3">Cell membrane</location>
        <topology evidence="3">Multi-pass membrane protein</topology>
    </subcellularLocation>
    <subcellularLocation>
        <location evidence="1">Bacterial flagellum basal body</location>
    </subcellularLocation>
</comment>
<comment type="similarity">
    <text evidence="3">Belongs to the FliR/MopE/SpaR family.</text>
</comment>
<name>FLIR_AQUAE</name>
<sequence length="258" mass="29178">MDKVTSEEFLITLLLSYFRIVSFLFTFPFYGSFLIPNTIRLYLAFALSFAVLSFINITPVKVNTFVEFLVYALNELLFGFSAGLILRLLFDALIIAGELIALHTGLGFLQMFIPGMTQMSLFSGFFTLYGTLIFLSLGGGEFIILGLAESFKRLPVGSFNIFYLNPEVFLNFFYESFRLGVKIAMPLILTALILNLVLAVVNRFIPQMNVFMVGLPLQVSIGLIILLLSLPLITITMSNHFQDFFKVFEYFIQSFKSP</sequence>
<evidence type="ECO:0000250" key="1"/>
<evidence type="ECO:0000255" key="2"/>
<evidence type="ECO:0000305" key="3"/>
<gene>
    <name type="primary">fliR</name>
    <name type="ordered locus">aq_1961</name>
</gene>
<organism>
    <name type="scientific">Aquifex aeolicus (strain VF5)</name>
    <dbReference type="NCBI Taxonomy" id="224324"/>
    <lineage>
        <taxon>Bacteria</taxon>
        <taxon>Pseudomonadati</taxon>
        <taxon>Aquificota</taxon>
        <taxon>Aquificia</taxon>
        <taxon>Aquificales</taxon>
        <taxon>Aquificaceae</taxon>
        <taxon>Aquifex</taxon>
    </lineage>
</organism>
<accession>O67773</accession>
<dbReference type="EMBL" id="AE000657">
    <property type="protein sequence ID" value="AAC07732.1"/>
    <property type="molecule type" value="Genomic_DNA"/>
</dbReference>
<dbReference type="PIR" id="A70468">
    <property type="entry name" value="A70468"/>
</dbReference>
<dbReference type="RefSeq" id="NP_214342.1">
    <property type="nucleotide sequence ID" value="NC_000918.1"/>
</dbReference>
<dbReference type="RefSeq" id="WP_010881278.1">
    <property type="nucleotide sequence ID" value="NC_000918.1"/>
</dbReference>
<dbReference type="SMR" id="O67773"/>
<dbReference type="FunCoup" id="O67773">
    <property type="interactions" value="38"/>
</dbReference>
<dbReference type="STRING" id="224324.aq_1961"/>
<dbReference type="EnsemblBacteria" id="AAC07732">
    <property type="protein sequence ID" value="AAC07732"/>
    <property type="gene ID" value="aq_1961"/>
</dbReference>
<dbReference type="KEGG" id="aae:aq_1961"/>
<dbReference type="PATRIC" id="fig|224324.8.peg.1512"/>
<dbReference type="eggNOG" id="COG1684">
    <property type="taxonomic scope" value="Bacteria"/>
</dbReference>
<dbReference type="HOGENOM" id="CLU_063626_2_2_0"/>
<dbReference type="InParanoid" id="O67773"/>
<dbReference type="OrthoDB" id="9807748at2"/>
<dbReference type="Proteomes" id="UP000000798">
    <property type="component" value="Chromosome"/>
</dbReference>
<dbReference type="GO" id="GO:0009425">
    <property type="term" value="C:bacterial-type flagellum basal body"/>
    <property type="evidence" value="ECO:0007669"/>
    <property type="project" value="UniProtKB-SubCell"/>
</dbReference>
<dbReference type="GO" id="GO:0005886">
    <property type="term" value="C:plasma membrane"/>
    <property type="evidence" value="ECO:0000318"/>
    <property type="project" value="GO_Central"/>
</dbReference>
<dbReference type="GO" id="GO:0044780">
    <property type="term" value="P:bacterial-type flagellum assembly"/>
    <property type="evidence" value="ECO:0007669"/>
    <property type="project" value="InterPro"/>
</dbReference>
<dbReference type="GO" id="GO:0006605">
    <property type="term" value="P:protein targeting"/>
    <property type="evidence" value="ECO:0007669"/>
    <property type="project" value="InterPro"/>
</dbReference>
<dbReference type="InterPro" id="IPR006303">
    <property type="entry name" value="FliR"/>
</dbReference>
<dbReference type="InterPro" id="IPR002010">
    <property type="entry name" value="T3SS_IM_R"/>
</dbReference>
<dbReference type="NCBIfam" id="TIGR01400">
    <property type="entry name" value="fliR"/>
    <property type="match status" value="1"/>
</dbReference>
<dbReference type="PANTHER" id="PTHR30065">
    <property type="entry name" value="FLAGELLAR BIOSYNTHETIC PROTEIN FLIR"/>
    <property type="match status" value="1"/>
</dbReference>
<dbReference type="PANTHER" id="PTHR30065:SF1">
    <property type="entry name" value="SURFACE PRESENTATION OF ANTIGENS PROTEIN SPAR"/>
    <property type="match status" value="1"/>
</dbReference>
<dbReference type="Pfam" id="PF01311">
    <property type="entry name" value="Bac_export_1"/>
    <property type="match status" value="1"/>
</dbReference>
<dbReference type="PRINTS" id="PR00953">
    <property type="entry name" value="TYPE3IMRPROT"/>
</dbReference>